<gene>
    <name evidence="4" type="primary">FGR3</name>
    <name type="ORF">FG04692</name>
    <name type="ORF">FGRAMPH1_01T16081</name>
</gene>
<feature type="chain" id="PRO_0000460589" description="Acetyltransferase FGR3">
    <location>
        <begin position="1"/>
        <end position="497"/>
    </location>
</feature>
<feature type="region of interest" description="Disordered" evidence="2">
    <location>
        <begin position="477"/>
        <end position="497"/>
    </location>
</feature>
<feature type="compositionally biased region" description="Low complexity" evidence="2">
    <location>
        <begin position="485"/>
        <end position="497"/>
    </location>
</feature>
<feature type="binding site" evidence="1">
    <location>
        <position position="221"/>
    </location>
    <ligand>
        <name>Ca(2+)</name>
        <dbReference type="ChEBI" id="CHEBI:29108"/>
    </ligand>
</feature>
<feature type="binding site" evidence="1">
    <location>
        <position position="224"/>
    </location>
    <ligand>
        <name>Ca(2+)</name>
        <dbReference type="ChEBI" id="CHEBI:29108"/>
    </ligand>
</feature>
<feature type="binding site" evidence="1">
    <location>
        <position position="255"/>
    </location>
    <ligand>
        <name>CoA</name>
        <dbReference type="ChEBI" id="CHEBI:57287"/>
    </ligand>
</feature>
<feature type="binding site" evidence="1">
    <location>
        <position position="303"/>
    </location>
    <ligand>
        <name>CoA</name>
        <dbReference type="ChEBI" id="CHEBI:57287"/>
    </ligand>
</feature>
<feature type="binding site" evidence="1">
    <location>
        <position position="386"/>
    </location>
    <ligand>
        <name>Ca(2+)</name>
        <dbReference type="ChEBI" id="CHEBI:29108"/>
    </ligand>
</feature>
<feature type="binding site" evidence="1">
    <location>
        <position position="396"/>
    </location>
    <ligand>
        <name>CoA</name>
        <dbReference type="ChEBI" id="CHEBI:57287"/>
    </ligand>
</feature>
<feature type="binding site" evidence="1">
    <location>
        <position position="462"/>
    </location>
    <ligand>
        <name>Ca(2+)</name>
        <dbReference type="ChEBI" id="CHEBI:29108"/>
    </ligand>
</feature>
<accession>I1RLA5</accession>
<sequence>MPKQHVYHLHPLGWENDPEEERFKVTTLDYLTVCSYNNYALFFKLEDSEKERAAEILKAGLERTLAQARHYCGTIEKDPGGGHSFTKKRNSTVRFFVQWLDAPEDADKYPSFEDLEKTNFSAVTLGDLEQWSVPPMTYGEKPEAHPDNSPVVSAFKANFIRGGLVFNIHHHHYTNDVMGWAGFVHQLAENCYAAVNGTKHPTWDPLNLDVSRLIKQEPPEDQKIDGPAPPERHPAHQVGMSLLFHLPKSKAAELKAKATPTDGTWISTYDAFSAFIWRNLTRIRAPVFNPDPKSTLYWCEAIDMRRRMHSPKVPPRIQHNVMFAVTSPTAPVTQPTVAQIMSEWSLSELASYIRRLTNSVTQENLDKTLEMVATIRDKTSLNTRVDAQPPLSILQTDHRDANITSADFGFAKPATYRHLLDRITEGVIIVYPPRDPLPESDEGCEFAIFYEKRLAQDLINDDEWSEYFEYRGVDAEDASEAKKANGTNGTNGVNGSS</sequence>
<proteinExistence type="inferred from homology"/>
<organism>
    <name type="scientific">Gibberella zeae (strain ATCC MYA-4620 / CBS 123657 / FGSC 9075 / NRRL 31084 / PH-1)</name>
    <name type="common">Wheat head blight fungus</name>
    <name type="synonym">Fusarium graminearum</name>
    <dbReference type="NCBI Taxonomy" id="229533"/>
    <lineage>
        <taxon>Eukaryota</taxon>
        <taxon>Fungi</taxon>
        <taxon>Dikarya</taxon>
        <taxon>Ascomycota</taxon>
        <taxon>Pezizomycotina</taxon>
        <taxon>Sordariomycetes</taxon>
        <taxon>Hypocreomycetidae</taxon>
        <taxon>Hypocreales</taxon>
        <taxon>Nectriaceae</taxon>
        <taxon>Fusarium</taxon>
    </lineage>
</organism>
<comment type="function">
    <text evidence="3 6">Acetyltransferase; part of the gene cluster that mediates the biosynthesis of the tetraketides fugralins such as linear fugralin A and cyclic fugralin B, volatile compounds that play a role in the asexual reproductive cycle but are not involved in pathogenicity (PubMed:38025899). One of the key features of fugralins is the presence of a double methyl group, which is only rarely encountered in fungal secondary metabolites. As the fugralins cluster does not contain an independent methyltransferase, the PKS FGR1 is probably responsible for adding two methyl groups to the same carbon atom (Probable). Fugralin B is similar to fugralin A except for a cyclization between the carboxylic acid C-8 and the alcohol on C-4 resulting in a six membered lactone ring, probably catalyzed by the cyclase FGR4 (Probable). The exact role of the individual cluster genes remains unknown and further work is needed to unravel the biosynthetic pathway (Probable).</text>
</comment>
<comment type="pathway">
    <text evidence="6">Secondary metabolite biosynthesis.</text>
</comment>
<comment type="similarity">
    <text evidence="5">Belongs to the trichothecene 3-O-acetyltransferase family.</text>
</comment>
<keyword id="KW-0106">Calcium</keyword>
<keyword id="KW-0479">Metal-binding</keyword>
<keyword id="KW-1185">Reference proteome</keyword>
<keyword id="KW-0808">Transferase</keyword>
<dbReference type="EC" id="2.3.1.-" evidence="6"/>
<dbReference type="EMBL" id="HG970334">
    <property type="protein sequence ID" value="CEF87675.1"/>
    <property type="molecule type" value="Genomic_DNA"/>
</dbReference>
<dbReference type="RefSeq" id="XP_011323124.1">
    <property type="nucleotide sequence ID" value="XM_011324822.1"/>
</dbReference>
<dbReference type="SMR" id="I1RLA5"/>
<dbReference type="KEGG" id="fgr:FGSG_04692"/>
<dbReference type="VEuPathDB" id="FungiDB:FGRAMPH1_01G16081"/>
<dbReference type="eggNOG" id="ENOG502SHDQ">
    <property type="taxonomic scope" value="Eukaryota"/>
</dbReference>
<dbReference type="HOGENOM" id="CLU_026450_2_1_1"/>
<dbReference type="InParanoid" id="I1RLA5"/>
<dbReference type="OrthoDB" id="78275at110618"/>
<dbReference type="Proteomes" id="UP000070720">
    <property type="component" value="Chromosome 3"/>
</dbReference>
<dbReference type="GO" id="GO:0046872">
    <property type="term" value="F:metal ion binding"/>
    <property type="evidence" value="ECO:0007669"/>
    <property type="project" value="UniProtKB-KW"/>
</dbReference>
<dbReference type="GO" id="GO:0016740">
    <property type="term" value="F:transferase activity"/>
    <property type="evidence" value="ECO:0007669"/>
    <property type="project" value="UniProtKB-KW"/>
</dbReference>
<dbReference type="Gene3D" id="3.30.559.10">
    <property type="entry name" value="Chloramphenicol acetyltransferase-like domain"/>
    <property type="match status" value="2"/>
</dbReference>
<dbReference type="InterPro" id="IPR023213">
    <property type="entry name" value="CAT-like_dom_sf"/>
</dbReference>
<dbReference type="InterPro" id="IPR051283">
    <property type="entry name" value="Sec_Metabolite_Acyltrans"/>
</dbReference>
<dbReference type="PANTHER" id="PTHR31896">
    <property type="entry name" value="FAMILY REGULATORY PROTEIN, PUTATIVE (AFU_ORTHOLOGUE AFUA_3G14730)-RELATED"/>
    <property type="match status" value="1"/>
</dbReference>
<dbReference type="PANTHER" id="PTHR31896:SF13">
    <property type="entry name" value="TRICHOTHECENE 3-O-ACETYLTRANSFERASE"/>
    <property type="match status" value="1"/>
</dbReference>
<dbReference type="Pfam" id="PF02458">
    <property type="entry name" value="Transferase"/>
    <property type="match status" value="1"/>
</dbReference>
<protein>
    <recommendedName>
        <fullName evidence="4">Acetyltransferase FGR3</fullName>
        <ecNumber evidence="6">2.3.1.-</ecNumber>
    </recommendedName>
    <alternativeName>
        <fullName evidence="4">Fugralins biosynthesis cluster protein 3</fullName>
    </alternativeName>
</protein>
<reference key="1">
    <citation type="journal article" date="2007" name="Science">
        <title>The Fusarium graminearum genome reveals a link between localized polymorphism and pathogen specialization.</title>
        <authorList>
            <person name="Cuomo C.A."/>
            <person name="Gueldener U."/>
            <person name="Xu J.-R."/>
            <person name="Trail F."/>
            <person name="Turgeon B.G."/>
            <person name="Di Pietro A."/>
            <person name="Walton J.D."/>
            <person name="Ma L.-J."/>
            <person name="Baker S.E."/>
            <person name="Rep M."/>
            <person name="Adam G."/>
            <person name="Antoniw J."/>
            <person name="Baldwin T."/>
            <person name="Calvo S.E."/>
            <person name="Chang Y.-L."/>
            <person name="DeCaprio D."/>
            <person name="Gale L.R."/>
            <person name="Gnerre S."/>
            <person name="Goswami R.S."/>
            <person name="Hammond-Kosack K."/>
            <person name="Harris L.J."/>
            <person name="Hilburn K."/>
            <person name="Kennell J.C."/>
            <person name="Kroken S."/>
            <person name="Magnuson J.K."/>
            <person name="Mannhaupt G."/>
            <person name="Mauceli E.W."/>
            <person name="Mewes H.-W."/>
            <person name="Mitterbauer R."/>
            <person name="Muehlbauer G."/>
            <person name="Muensterkoetter M."/>
            <person name="Nelson D."/>
            <person name="O'Donnell K."/>
            <person name="Ouellet T."/>
            <person name="Qi W."/>
            <person name="Quesneville H."/>
            <person name="Roncero M.I.G."/>
            <person name="Seong K.-Y."/>
            <person name="Tetko I.V."/>
            <person name="Urban M."/>
            <person name="Waalwijk C."/>
            <person name="Ward T.J."/>
            <person name="Yao J."/>
            <person name="Birren B.W."/>
            <person name="Kistler H.C."/>
        </authorList>
    </citation>
    <scope>NUCLEOTIDE SEQUENCE [LARGE SCALE GENOMIC DNA]</scope>
    <source>
        <strain>ATCC MYA-4620 / CBS 123657 / FGSC 9075 / NRRL 31084 / PH-1</strain>
    </source>
</reference>
<reference key="2">
    <citation type="journal article" date="2010" name="Nature">
        <title>Comparative genomics reveals mobile pathogenicity chromosomes in Fusarium.</title>
        <authorList>
            <person name="Ma L.-J."/>
            <person name="van der Does H.C."/>
            <person name="Borkovich K.A."/>
            <person name="Coleman J.J."/>
            <person name="Daboussi M.-J."/>
            <person name="Di Pietro A."/>
            <person name="Dufresne M."/>
            <person name="Freitag M."/>
            <person name="Grabherr M."/>
            <person name="Henrissat B."/>
            <person name="Houterman P.M."/>
            <person name="Kang S."/>
            <person name="Shim W.-B."/>
            <person name="Woloshuk C."/>
            <person name="Xie X."/>
            <person name="Xu J.-R."/>
            <person name="Antoniw J."/>
            <person name="Baker S.E."/>
            <person name="Bluhm B.H."/>
            <person name="Breakspear A."/>
            <person name="Brown D.W."/>
            <person name="Butchko R.A.E."/>
            <person name="Chapman S."/>
            <person name="Coulson R."/>
            <person name="Coutinho P.M."/>
            <person name="Danchin E.G.J."/>
            <person name="Diener A."/>
            <person name="Gale L.R."/>
            <person name="Gardiner D.M."/>
            <person name="Goff S."/>
            <person name="Hammond-Kosack K.E."/>
            <person name="Hilburn K."/>
            <person name="Hua-Van A."/>
            <person name="Jonkers W."/>
            <person name="Kazan K."/>
            <person name="Kodira C.D."/>
            <person name="Koehrsen M."/>
            <person name="Kumar L."/>
            <person name="Lee Y.-H."/>
            <person name="Li L."/>
            <person name="Manners J.M."/>
            <person name="Miranda-Saavedra D."/>
            <person name="Mukherjee M."/>
            <person name="Park G."/>
            <person name="Park J."/>
            <person name="Park S.-Y."/>
            <person name="Proctor R.H."/>
            <person name="Regev A."/>
            <person name="Ruiz-Roldan M.C."/>
            <person name="Sain D."/>
            <person name="Sakthikumar S."/>
            <person name="Sykes S."/>
            <person name="Schwartz D.C."/>
            <person name="Turgeon B.G."/>
            <person name="Wapinski I."/>
            <person name="Yoder O."/>
            <person name="Young S."/>
            <person name="Zeng Q."/>
            <person name="Zhou S."/>
            <person name="Galagan J."/>
            <person name="Cuomo C.A."/>
            <person name="Kistler H.C."/>
            <person name="Rep M."/>
        </authorList>
    </citation>
    <scope>GENOME REANNOTATION</scope>
    <source>
        <strain>ATCC MYA-4620 / CBS 123657 / FGSC 9075 / NRRL 31084 / PH-1</strain>
    </source>
</reference>
<reference key="3">
    <citation type="journal article" date="2015" name="BMC Genomics">
        <title>The completed genome sequence of the pathogenic ascomycete fungus Fusarium graminearum.</title>
        <authorList>
            <person name="King R."/>
            <person name="Urban M."/>
            <person name="Hammond-Kosack M.C.U."/>
            <person name="Hassani-Pak K."/>
            <person name="Hammond-Kosack K.E."/>
        </authorList>
    </citation>
    <scope>NUCLEOTIDE SEQUENCE [LARGE SCALE GENOMIC DNA]</scope>
    <source>
        <strain>ATCC MYA-4620 / CBS 123657 / FGSC 9075 / NRRL 31084 / PH-1</strain>
    </source>
</reference>
<reference key="4">
    <citation type="journal article" date="2023" name="Front. Fungal Biol.">
        <title>Filling out the gaps - identification of fugralins as products of the PKS2 cluster in Fusarium graminearum.</title>
        <authorList>
            <person name="Severinsen M.M."/>
            <person name="Westphal K.R."/>
            <person name="Terp M."/>
            <person name="Soerensen T."/>
            <person name="Olsen A."/>
            <person name="Bachleitner S."/>
            <person name="Studt-Reinhold L."/>
            <person name="Wimmer R."/>
            <person name="Sondergaard T.E."/>
            <person name="Soerensen J.L."/>
        </authorList>
    </citation>
    <scope>FUNCTION</scope>
    <scope>PATHWAY</scope>
</reference>
<name>FGR3_GIBZE</name>
<evidence type="ECO:0000250" key="1">
    <source>
        <dbReference type="UniProtKB" id="O94197"/>
    </source>
</evidence>
<evidence type="ECO:0000256" key="2">
    <source>
        <dbReference type="SAM" id="MobiDB-lite"/>
    </source>
</evidence>
<evidence type="ECO:0000269" key="3">
    <source>
    </source>
</evidence>
<evidence type="ECO:0000303" key="4">
    <source>
    </source>
</evidence>
<evidence type="ECO:0000305" key="5"/>
<evidence type="ECO:0000305" key="6">
    <source>
    </source>
</evidence>